<protein>
    <recommendedName>
        <fullName evidence="1">Small ribosomal subunit protein uS7</fullName>
    </recommendedName>
    <alternativeName>
        <fullName evidence="2">30S ribosomal protein S7</fullName>
    </alternativeName>
</protein>
<feature type="chain" id="PRO_1000135604" description="Small ribosomal subunit protein uS7">
    <location>
        <begin position="1"/>
        <end position="156"/>
    </location>
</feature>
<name>RS7_ECO81</name>
<keyword id="KW-0687">Ribonucleoprotein</keyword>
<keyword id="KW-0689">Ribosomal protein</keyword>
<keyword id="KW-0694">RNA-binding</keyword>
<keyword id="KW-0699">rRNA-binding</keyword>
<keyword id="KW-0820">tRNA-binding</keyword>
<comment type="function">
    <text evidence="1">One of the primary rRNA binding proteins, it binds directly to 16S rRNA where it nucleates assembly of the head domain of the 30S subunit. Is located at the subunit interface close to the decoding center, probably blocks exit of the E-site tRNA.</text>
</comment>
<comment type="subunit">
    <text evidence="1">Part of the 30S ribosomal subunit. Contacts proteins S9 and S11.</text>
</comment>
<comment type="similarity">
    <text evidence="1">Belongs to the universal ribosomal protein uS7 family.</text>
</comment>
<dbReference type="EMBL" id="CU928162">
    <property type="protein sequence ID" value="CAR10140.2"/>
    <property type="molecule type" value="Genomic_DNA"/>
</dbReference>
<dbReference type="RefSeq" id="WP_001138043.1">
    <property type="nucleotide sequence ID" value="NC_011745.1"/>
</dbReference>
<dbReference type="SMR" id="B7N1C2"/>
<dbReference type="GeneID" id="93778657"/>
<dbReference type="KEGG" id="ecq:ECED1_4001"/>
<dbReference type="HOGENOM" id="CLU_072226_1_1_6"/>
<dbReference type="Proteomes" id="UP000000748">
    <property type="component" value="Chromosome"/>
</dbReference>
<dbReference type="GO" id="GO:0015935">
    <property type="term" value="C:small ribosomal subunit"/>
    <property type="evidence" value="ECO:0007669"/>
    <property type="project" value="InterPro"/>
</dbReference>
<dbReference type="GO" id="GO:0019843">
    <property type="term" value="F:rRNA binding"/>
    <property type="evidence" value="ECO:0007669"/>
    <property type="project" value="UniProtKB-UniRule"/>
</dbReference>
<dbReference type="GO" id="GO:0003735">
    <property type="term" value="F:structural constituent of ribosome"/>
    <property type="evidence" value="ECO:0007669"/>
    <property type="project" value="InterPro"/>
</dbReference>
<dbReference type="GO" id="GO:0000049">
    <property type="term" value="F:tRNA binding"/>
    <property type="evidence" value="ECO:0007669"/>
    <property type="project" value="UniProtKB-UniRule"/>
</dbReference>
<dbReference type="GO" id="GO:0006412">
    <property type="term" value="P:translation"/>
    <property type="evidence" value="ECO:0007669"/>
    <property type="project" value="UniProtKB-UniRule"/>
</dbReference>
<dbReference type="CDD" id="cd14869">
    <property type="entry name" value="uS7_Bacteria"/>
    <property type="match status" value="1"/>
</dbReference>
<dbReference type="FunFam" id="1.10.455.10:FF:000001">
    <property type="entry name" value="30S ribosomal protein S7"/>
    <property type="match status" value="1"/>
</dbReference>
<dbReference type="Gene3D" id="1.10.455.10">
    <property type="entry name" value="Ribosomal protein S7 domain"/>
    <property type="match status" value="1"/>
</dbReference>
<dbReference type="HAMAP" id="MF_00480_B">
    <property type="entry name" value="Ribosomal_uS7_B"/>
    <property type="match status" value="1"/>
</dbReference>
<dbReference type="InterPro" id="IPR000235">
    <property type="entry name" value="Ribosomal_uS7"/>
</dbReference>
<dbReference type="InterPro" id="IPR005717">
    <property type="entry name" value="Ribosomal_uS7_bac/org-type"/>
</dbReference>
<dbReference type="InterPro" id="IPR020606">
    <property type="entry name" value="Ribosomal_uS7_CS"/>
</dbReference>
<dbReference type="InterPro" id="IPR023798">
    <property type="entry name" value="Ribosomal_uS7_dom"/>
</dbReference>
<dbReference type="InterPro" id="IPR036823">
    <property type="entry name" value="Ribosomal_uS7_dom_sf"/>
</dbReference>
<dbReference type="NCBIfam" id="TIGR01029">
    <property type="entry name" value="rpsG_bact"/>
    <property type="match status" value="1"/>
</dbReference>
<dbReference type="PANTHER" id="PTHR11205">
    <property type="entry name" value="RIBOSOMAL PROTEIN S7"/>
    <property type="match status" value="1"/>
</dbReference>
<dbReference type="Pfam" id="PF00177">
    <property type="entry name" value="Ribosomal_S7"/>
    <property type="match status" value="1"/>
</dbReference>
<dbReference type="PIRSF" id="PIRSF002122">
    <property type="entry name" value="RPS7p_RPS7a_RPS5e_RPS7o"/>
    <property type="match status" value="1"/>
</dbReference>
<dbReference type="SUPFAM" id="SSF47973">
    <property type="entry name" value="Ribosomal protein S7"/>
    <property type="match status" value="1"/>
</dbReference>
<dbReference type="PROSITE" id="PS00052">
    <property type="entry name" value="RIBOSOMAL_S7"/>
    <property type="match status" value="1"/>
</dbReference>
<evidence type="ECO:0000255" key="1">
    <source>
        <dbReference type="HAMAP-Rule" id="MF_00480"/>
    </source>
</evidence>
<evidence type="ECO:0000305" key="2"/>
<proteinExistence type="inferred from homology"/>
<gene>
    <name evidence="1" type="primary">rpsG</name>
    <name type="ordered locus">ECED1_4001</name>
</gene>
<organism>
    <name type="scientific">Escherichia coli O81 (strain ED1a)</name>
    <dbReference type="NCBI Taxonomy" id="585397"/>
    <lineage>
        <taxon>Bacteria</taxon>
        <taxon>Pseudomonadati</taxon>
        <taxon>Pseudomonadota</taxon>
        <taxon>Gammaproteobacteria</taxon>
        <taxon>Enterobacterales</taxon>
        <taxon>Enterobacteriaceae</taxon>
        <taxon>Escherichia</taxon>
    </lineage>
</organism>
<reference key="1">
    <citation type="journal article" date="2009" name="PLoS Genet.">
        <title>Organised genome dynamics in the Escherichia coli species results in highly diverse adaptive paths.</title>
        <authorList>
            <person name="Touchon M."/>
            <person name="Hoede C."/>
            <person name="Tenaillon O."/>
            <person name="Barbe V."/>
            <person name="Baeriswyl S."/>
            <person name="Bidet P."/>
            <person name="Bingen E."/>
            <person name="Bonacorsi S."/>
            <person name="Bouchier C."/>
            <person name="Bouvet O."/>
            <person name="Calteau A."/>
            <person name="Chiapello H."/>
            <person name="Clermont O."/>
            <person name="Cruveiller S."/>
            <person name="Danchin A."/>
            <person name="Diard M."/>
            <person name="Dossat C."/>
            <person name="Karoui M.E."/>
            <person name="Frapy E."/>
            <person name="Garry L."/>
            <person name="Ghigo J.M."/>
            <person name="Gilles A.M."/>
            <person name="Johnson J."/>
            <person name="Le Bouguenec C."/>
            <person name="Lescat M."/>
            <person name="Mangenot S."/>
            <person name="Martinez-Jehanne V."/>
            <person name="Matic I."/>
            <person name="Nassif X."/>
            <person name="Oztas S."/>
            <person name="Petit M.A."/>
            <person name="Pichon C."/>
            <person name="Rouy Z."/>
            <person name="Ruf C.S."/>
            <person name="Schneider D."/>
            <person name="Tourret J."/>
            <person name="Vacherie B."/>
            <person name="Vallenet D."/>
            <person name="Medigue C."/>
            <person name="Rocha E.P.C."/>
            <person name="Denamur E."/>
        </authorList>
    </citation>
    <scope>NUCLEOTIDE SEQUENCE [LARGE SCALE GENOMIC DNA]</scope>
    <source>
        <strain>ED1a</strain>
    </source>
</reference>
<accession>B7N1C2</accession>
<sequence>MPRRRVIGQRKILPDPKFGSELLAKFVNILMVDGKKSTAESIVYSALETLAQRSGKSELEAFEVALENVRPTVEVKSRRVGGSTYQVPVEVRPVRRNALAMRWIVEAARKRGDKSMALRLANELSDAAENKGTAVKKREDVHRMAEANKAFAHYRW</sequence>